<reference key="1">
    <citation type="submission" date="2008-03" db="EMBL/GenBank/DDBJ databases">
        <title>Complete sequence of Thermoproteus neutrophilus V24Sta.</title>
        <authorList>
            <consortium name="US DOE Joint Genome Institute"/>
            <person name="Copeland A."/>
            <person name="Lucas S."/>
            <person name="Lapidus A."/>
            <person name="Glavina del Rio T."/>
            <person name="Dalin E."/>
            <person name="Tice H."/>
            <person name="Bruce D."/>
            <person name="Goodwin L."/>
            <person name="Pitluck S."/>
            <person name="Sims D."/>
            <person name="Brettin T."/>
            <person name="Detter J.C."/>
            <person name="Han C."/>
            <person name="Kuske C.R."/>
            <person name="Schmutz J."/>
            <person name="Larimer F."/>
            <person name="Land M."/>
            <person name="Hauser L."/>
            <person name="Kyrpides N."/>
            <person name="Mikhailova N."/>
            <person name="Biddle J.F."/>
            <person name="Zhang Z."/>
            <person name="Fitz-Gibbon S.T."/>
            <person name="Lowe T.M."/>
            <person name="Saltikov C."/>
            <person name="House C.H."/>
            <person name="Richardson P."/>
        </authorList>
    </citation>
    <scope>NUCLEOTIDE SEQUENCE [LARGE SCALE GENOMIC DNA]</scope>
    <source>
        <strain>DSM 2338 / JCM 9278 / NBRC 100436 / V24Sta</strain>
    </source>
</reference>
<feature type="chain" id="PRO_1000115646" description="A-type ATP synthase subunit A">
    <location>
        <begin position="1"/>
        <end position="594"/>
    </location>
</feature>
<feature type="binding site" evidence="1">
    <location>
        <begin position="236"/>
        <end position="243"/>
    </location>
    <ligand>
        <name>ATP</name>
        <dbReference type="ChEBI" id="CHEBI:30616"/>
    </ligand>
</feature>
<protein>
    <recommendedName>
        <fullName evidence="1">A-type ATP synthase subunit A</fullName>
        <ecNumber evidence="1">7.1.2.2</ecNumber>
    </recommendedName>
</protein>
<keyword id="KW-0066">ATP synthesis</keyword>
<keyword id="KW-0067">ATP-binding</keyword>
<keyword id="KW-1003">Cell membrane</keyword>
<keyword id="KW-0375">Hydrogen ion transport</keyword>
<keyword id="KW-0406">Ion transport</keyword>
<keyword id="KW-0472">Membrane</keyword>
<keyword id="KW-0547">Nucleotide-binding</keyword>
<keyword id="KW-1278">Translocase</keyword>
<keyword id="KW-0813">Transport</keyword>
<dbReference type="EC" id="7.1.2.2" evidence="1"/>
<dbReference type="EMBL" id="CP001014">
    <property type="protein sequence ID" value="ACB40876.1"/>
    <property type="molecule type" value="Genomic_DNA"/>
</dbReference>
<dbReference type="RefSeq" id="WP_012351295.1">
    <property type="nucleotide sequence ID" value="NC_010525.1"/>
</dbReference>
<dbReference type="SMR" id="B1YC22"/>
<dbReference type="STRING" id="444157.Tneu_1961"/>
<dbReference type="GeneID" id="6164391"/>
<dbReference type="KEGG" id="tne:Tneu_1961"/>
<dbReference type="eggNOG" id="arCOG00868">
    <property type="taxonomic scope" value="Archaea"/>
</dbReference>
<dbReference type="HOGENOM" id="CLU_008162_3_1_2"/>
<dbReference type="OrthoDB" id="115235at2157"/>
<dbReference type="Proteomes" id="UP000001694">
    <property type="component" value="Chromosome"/>
</dbReference>
<dbReference type="GO" id="GO:0005886">
    <property type="term" value="C:plasma membrane"/>
    <property type="evidence" value="ECO:0007669"/>
    <property type="project" value="UniProtKB-SubCell"/>
</dbReference>
<dbReference type="GO" id="GO:0005524">
    <property type="term" value="F:ATP binding"/>
    <property type="evidence" value="ECO:0007669"/>
    <property type="project" value="UniProtKB-UniRule"/>
</dbReference>
<dbReference type="GO" id="GO:0046933">
    <property type="term" value="F:proton-transporting ATP synthase activity, rotational mechanism"/>
    <property type="evidence" value="ECO:0007669"/>
    <property type="project" value="UniProtKB-UniRule"/>
</dbReference>
<dbReference type="GO" id="GO:0046961">
    <property type="term" value="F:proton-transporting ATPase activity, rotational mechanism"/>
    <property type="evidence" value="ECO:0007669"/>
    <property type="project" value="InterPro"/>
</dbReference>
<dbReference type="GO" id="GO:0042777">
    <property type="term" value="P:proton motive force-driven plasma membrane ATP synthesis"/>
    <property type="evidence" value="ECO:0007669"/>
    <property type="project" value="UniProtKB-UniRule"/>
</dbReference>
<dbReference type="CDD" id="cd18111">
    <property type="entry name" value="ATP-synt_V_A-type_alpha_C"/>
    <property type="match status" value="1"/>
</dbReference>
<dbReference type="CDD" id="cd18119">
    <property type="entry name" value="ATP-synt_V_A-type_alpha_N"/>
    <property type="match status" value="1"/>
</dbReference>
<dbReference type="CDD" id="cd01134">
    <property type="entry name" value="V_A-ATPase_A"/>
    <property type="match status" value="1"/>
</dbReference>
<dbReference type="FunFam" id="2.40.30.20:FF:000002">
    <property type="entry name" value="V-type proton ATPase catalytic subunit A"/>
    <property type="match status" value="1"/>
</dbReference>
<dbReference type="Gene3D" id="2.40.30.20">
    <property type="match status" value="1"/>
</dbReference>
<dbReference type="Gene3D" id="2.40.50.100">
    <property type="match status" value="1"/>
</dbReference>
<dbReference type="Gene3D" id="1.10.1140.10">
    <property type="entry name" value="Bovine Mitochondrial F1-atpase, Atp Synthase Beta Chain, Chain D, domain 3"/>
    <property type="match status" value="1"/>
</dbReference>
<dbReference type="Gene3D" id="3.40.50.300">
    <property type="entry name" value="P-loop containing nucleotide triphosphate hydrolases"/>
    <property type="match status" value="1"/>
</dbReference>
<dbReference type="HAMAP" id="MF_00309">
    <property type="entry name" value="ATP_synth_A_arch"/>
    <property type="match status" value="1"/>
</dbReference>
<dbReference type="InterPro" id="IPR055190">
    <property type="entry name" value="ATP-synt_VA_C"/>
</dbReference>
<dbReference type="InterPro" id="IPR031686">
    <property type="entry name" value="ATP-synth_a_Xtn"/>
</dbReference>
<dbReference type="InterPro" id="IPR023366">
    <property type="entry name" value="ATP_synth_asu-like_sf"/>
</dbReference>
<dbReference type="InterPro" id="IPR004100">
    <property type="entry name" value="ATPase_F1/V1/A1_a/bsu_N"/>
</dbReference>
<dbReference type="InterPro" id="IPR036121">
    <property type="entry name" value="ATPase_F1/V1/A1_a/bsu_N_sf"/>
</dbReference>
<dbReference type="InterPro" id="IPR000194">
    <property type="entry name" value="ATPase_F1/V1/A1_a/bsu_nucl-bd"/>
</dbReference>
<dbReference type="InterPro" id="IPR024034">
    <property type="entry name" value="ATPase_F1/V1_b/a_C"/>
</dbReference>
<dbReference type="InterPro" id="IPR027417">
    <property type="entry name" value="P-loop_NTPase"/>
</dbReference>
<dbReference type="InterPro" id="IPR022878">
    <property type="entry name" value="V-ATPase_asu"/>
</dbReference>
<dbReference type="NCBIfam" id="NF003220">
    <property type="entry name" value="PRK04192.1"/>
    <property type="match status" value="1"/>
</dbReference>
<dbReference type="PANTHER" id="PTHR43607:SF1">
    <property type="entry name" value="H(+)-TRANSPORTING TWO-SECTOR ATPASE"/>
    <property type="match status" value="1"/>
</dbReference>
<dbReference type="PANTHER" id="PTHR43607">
    <property type="entry name" value="V-TYPE PROTON ATPASE CATALYTIC SUBUNIT A"/>
    <property type="match status" value="1"/>
</dbReference>
<dbReference type="Pfam" id="PF00006">
    <property type="entry name" value="ATP-synt_ab"/>
    <property type="match status" value="1"/>
</dbReference>
<dbReference type="Pfam" id="PF02874">
    <property type="entry name" value="ATP-synt_ab_N"/>
    <property type="match status" value="1"/>
</dbReference>
<dbReference type="Pfam" id="PF16886">
    <property type="entry name" value="ATP-synt_ab_Xtn"/>
    <property type="match status" value="1"/>
</dbReference>
<dbReference type="Pfam" id="PF22919">
    <property type="entry name" value="ATP-synt_VA_C"/>
    <property type="match status" value="1"/>
</dbReference>
<dbReference type="SUPFAM" id="SSF47917">
    <property type="entry name" value="C-terminal domain of alpha and beta subunits of F1 ATP synthase"/>
    <property type="match status" value="1"/>
</dbReference>
<dbReference type="SUPFAM" id="SSF50615">
    <property type="entry name" value="N-terminal domain of alpha and beta subunits of F1 ATP synthase"/>
    <property type="match status" value="1"/>
</dbReference>
<dbReference type="SUPFAM" id="SSF52540">
    <property type="entry name" value="P-loop containing nucleoside triphosphate hydrolases"/>
    <property type="match status" value="1"/>
</dbReference>
<organism>
    <name type="scientific">Pyrobaculum neutrophilum (strain DSM 2338 / JCM 9278 / NBRC 100436 / V24Sta)</name>
    <name type="common">Thermoproteus neutrophilus</name>
    <dbReference type="NCBI Taxonomy" id="444157"/>
    <lineage>
        <taxon>Archaea</taxon>
        <taxon>Thermoproteota</taxon>
        <taxon>Thermoprotei</taxon>
        <taxon>Thermoproteales</taxon>
        <taxon>Thermoproteaceae</taxon>
        <taxon>Pyrobaculum</taxon>
    </lineage>
</organism>
<name>AATA_PYRNV</name>
<evidence type="ECO:0000255" key="1">
    <source>
        <dbReference type="HAMAP-Rule" id="MF_00309"/>
    </source>
</evidence>
<comment type="function">
    <text evidence="1">Component of the A-type ATP synthase that produces ATP from ADP in the presence of a proton gradient across the membrane. The A chain is the catalytic subunit.</text>
</comment>
<comment type="catalytic activity">
    <reaction evidence="1">
        <text>ATP + H2O + 4 H(+)(in) = ADP + phosphate + 5 H(+)(out)</text>
        <dbReference type="Rhea" id="RHEA:57720"/>
        <dbReference type="ChEBI" id="CHEBI:15377"/>
        <dbReference type="ChEBI" id="CHEBI:15378"/>
        <dbReference type="ChEBI" id="CHEBI:30616"/>
        <dbReference type="ChEBI" id="CHEBI:43474"/>
        <dbReference type="ChEBI" id="CHEBI:456216"/>
        <dbReference type="EC" id="7.1.2.2"/>
    </reaction>
</comment>
<comment type="subunit">
    <text evidence="1">Has multiple subunits with at least A(3), B(3), C, D, E, F, H, I and proteolipid K(x).</text>
</comment>
<comment type="subcellular location">
    <subcellularLocation>
        <location evidence="1">Cell membrane</location>
        <topology evidence="1">Peripheral membrane protein</topology>
    </subcellularLocation>
</comment>
<comment type="similarity">
    <text evidence="1">Belongs to the ATPase alpha/beta chains family.</text>
</comment>
<sequence length="594" mass="66141">MSGRIEYIAGPVVKADLPGAKLYELVFVGEIKLFGEVVRVQGDKAFIQVYEDTTGLRPGEPVVRSGEPLSAWLGPTIIGKIYDGVQRPLKNIEEISKSPFIARGIGYDQAPPLDLKAEFDFKPAVKPGEEVSPGDVLGSVKETELMTHYILYPPLPENAPGVVEWVADGKYKVDDVIARIKTKRGIVEVKMWHKWPVRRPRPFREKLPPVEPLITGVRTIDTMFPIAKGGAAAVPGPFGSGKTVTIRTLSMFAQSRFIIPVLCGERGNEAADALHGLLKLKDPTTGRSLLERTTIIVNTSNMPVAAREASVYMGTTLGEYFRDQGYDVLVLADSTSRWAEAMREVALRIGEMPSEEGYPAYLPTRLAEFYERAGRVVLIGSKERVGSLTIAASVSPPGGDFTEPVTSNTLRFIGAFWPLSPRLAYSRHYPAIDWLAAFSRYVDTVEVWWSKNISTEWRRIRDTLQSLLVKEAELQEIVRILGTEALSEYEKHVLNVAFMIREGFLKQDAFNPVDTPSSPIKQFLLMKAIYAYYEEGMKAIEAGVPAAVLRELETVKRLPRLRMEVTNDVAKEELTKFIESLVSEIRSVLAARKQ</sequence>
<accession>B1YC22</accession>
<proteinExistence type="inferred from homology"/>
<gene>
    <name evidence="1" type="primary">atpA</name>
    <name type="ordered locus">Tneu_1961</name>
</gene>